<comment type="function">
    <text evidence="1">One of the primary rRNA binding proteins, it binds directly to 16S rRNA central domain where it helps coordinate assembly of the platform of the 30S subunit.</text>
</comment>
<comment type="subunit">
    <text evidence="1">Part of the 30S ribosomal subunit. Contacts proteins S5 and S12.</text>
</comment>
<comment type="similarity">
    <text evidence="1">Belongs to the universal ribosomal protein uS8 family.</text>
</comment>
<sequence>MVMSDPIADLLTRIRNANVVRHEVVEVPSSNIKKAIANIMLTEGYIRDLEEYRDGSVDMLRITMKYGQNKERIITGLKRISKPGLRVYCRKDETPKVLNGLGVAVVSTSKGIVTDREARKLGVGGEVLCYIW</sequence>
<gene>
    <name evidence="1" type="primary">rpsH</name>
    <name type="ordered locus">CLK_2910</name>
</gene>
<feature type="chain" id="PRO_1000140537" description="Small ribosomal subunit protein uS8">
    <location>
        <begin position="1"/>
        <end position="132"/>
    </location>
</feature>
<dbReference type="EMBL" id="CP000962">
    <property type="protein sequence ID" value="ACA55822.1"/>
    <property type="molecule type" value="Genomic_DNA"/>
</dbReference>
<dbReference type="RefSeq" id="WP_003357687.1">
    <property type="nucleotide sequence ID" value="NC_010520.1"/>
</dbReference>
<dbReference type="SMR" id="B1KSL1"/>
<dbReference type="GeneID" id="5184529"/>
<dbReference type="KEGG" id="cbl:CLK_2910"/>
<dbReference type="HOGENOM" id="CLU_098428_0_2_9"/>
<dbReference type="GO" id="GO:1990904">
    <property type="term" value="C:ribonucleoprotein complex"/>
    <property type="evidence" value="ECO:0007669"/>
    <property type="project" value="UniProtKB-KW"/>
</dbReference>
<dbReference type="GO" id="GO:0005840">
    <property type="term" value="C:ribosome"/>
    <property type="evidence" value="ECO:0007669"/>
    <property type="project" value="UniProtKB-KW"/>
</dbReference>
<dbReference type="GO" id="GO:0019843">
    <property type="term" value="F:rRNA binding"/>
    <property type="evidence" value="ECO:0007669"/>
    <property type="project" value="UniProtKB-UniRule"/>
</dbReference>
<dbReference type="GO" id="GO:0003735">
    <property type="term" value="F:structural constituent of ribosome"/>
    <property type="evidence" value="ECO:0007669"/>
    <property type="project" value="InterPro"/>
</dbReference>
<dbReference type="GO" id="GO:0006412">
    <property type="term" value="P:translation"/>
    <property type="evidence" value="ECO:0007669"/>
    <property type="project" value="UniProtKB-UniRule"/>
</dbReference>
<dbReference type="FunFam" id="3.30.1370.30:FF:000002">
    <property type="entry name" value="30S ribosomal protein S8"/>
    <property type="match status" value="1"/>
</dbReference>
<dbReference type="FunFam" id="3.30.1490.10:FF:000001">
    <property type="entry name" value="30S ribosomal protein S8"/>
    <property type="match status" value="1"/>
</dbReference>
<dbReference type="Gene3D" id="3.30.1370.30">
    <property type="match status" value="1"/>
</dbReference>
<dbReference type="Gene3D" id="3.30.1490.10">
    <property type="match status" value="1"/>
</dbReference>
<dbReference type="HAMAP" id="MF_01302_B">
    <property type="entry name" value="Ribosomal_uS8_B"/>
    <property type="match status" value="1"/>
</dbReference>
<dbReference type="InterPro" id="IPR000630">
    <property type="entry name" value="Ribosomal_uS8"/>
</dbReference>
<dbReference type="InterPro" id="IPR047863">
    <property type="entry name" value="Ribosomal_uS8_CS"/>
</dbReference>
<dbReference type="InterPro" id="IPR035987">
    <property type="entry name" value="Ribosomal_uS8_sf"/>
</dbReference>
<dbReference type="NCBIfam" id="NF001109">
    <property type="entry name" value="PRK00136.1"/>
    <property type="match status" value="1"/>
</dbReference>
<dbReference type="PANTHER" id="PTHR11758">
    <property type="entry name" value="40S RIBOSOMAL PROTEIN S15A"/>
    <property type="match status" value="1"/>
</dbReference>
<dbReference type="Pfam" id="PF00410">
    <property type="entry name" value="Ribosomal_S8"/>
    <property type="match status" value="1"/>
</dbReference>
<dbReference type="SUPFAM" id="SSF56047">
    <property type="entry name" value="Ribosomal protein S8"/>
    <property type="match status" value="1"/>
</dbReference>
<dbReference type="PROSITE" id="PS00053">
    <property type="entry name" value="RIBOSOMAL_S8"/>
    <property type="match status" value="1"/>
</dbReference>
<keyword id="KW-0687">Ribonucleoprotein</keyword>
<keyword id="KW-0689">Ribosomal protein</keyword>
<keyword id="KW-0694">RNA-binding</keyword>
<keyword id="KW-0699">rRNA-binding</keyword>
<evidence type="ECO:0000255" key="1">
    <source>
        <dbReference type="HAMAP-Rule" id="MF_01302"/>
    </source>
</evidence>
<evidence type="ECO:0000305" key="2"/>
<accession>B1KSL1</accession>
<proteinExistence type="inferred from homology"/>
<organism>
    <name type="scientific">Clostridium botulinum (strain Loch Maree / Type A3)</name>
    <dbReference type="NCBI Taxonomy" id="498214"/>
    <lineage>
        <taxon>Bacteria</taxon>
        <taxon>Bacillati</taxon>
        <taxon>Bacillota</taxon>
        <taxon>Clostridia</taxon>
        <taxon>Eubacteriales</taxon>
        <taxon>Clostridiaceae</taxon>
        <taxon>Clostridium</taxon>
    </lineage>
</organism>
<protein>
    <recommendedName>
        <fullName evidence="1">Small ribosomal subunit protein uS8</fullName>
    </recommendedName>
    <alternativeName>
        <fullName evidence="2">30S ribosomal protein S8</fullName>
    </alternativeName>
</protein>
<reference key="1">
    <citation type="journal article" date="2007" name="PLoS ONE">
        <title>Analysis of the neurotoxin complex genes in Clostridium botulinum A1-A4 and B1 strains: BoNT/A3, /Ba4 and /B1 clusters are located within plasmids.</title>
        <authorList>
            <person name="Smith T.J."/>
            <person name="Hill K.K."/>
            <person name="Foley B.T."/>
            <person name="Detter J.C."/>
            <person name="Munk A.C."/>
            <person name="Bruce D.C."/>
            <person name="Doggett N.A."/>
            <person name="Smith L.A."/>
            <person name="Marks J.D."/>
            <person name="Xie G."/>
            <person name="Brettin T.S."/>
        </authorList>
    </citation>
    <scope>NUCLEOTIDE SEQUENCE [LARGE SCALE GENOMIC DNA]</scope>
    <source>
        <strain>Loch Maree / Type A3</strain>
    </source>
</reference>
<name>RS8_CLOBM</name>